<feature type="chain" id="PRO_0000091656" description="3-hydroxyacyl-[acyl-carrier-protein] dehydratase FabZ">
    <location>
        <begin position="1"/>
        <end position="155"/>
    </location>
</feature>
<feature type="active site" evidence="1">
    <location>
        <position position="54"/>
    </location>
</feature>
<name>FABZ_BURPS</name>
<reference key="1">
    <citation type="journal article" date="2004" name="Proc. Natl. Acad. Sci. U.S.A.">
        <title>Genomic plasticity of the causative agent of melioidosis, Burkholderia pseudomallei.</title>
        <authorList>
            <person name="Holden M.T.G."/>
            <person name="Titball R.W."/>
            <person name="Peacock S.J."/>
            <person name="Cerdeno-Tarraga A.-M."/>
            <person name="Atkins T."/>
            <person name="Crossman L.C."/>
            <person name="Pitt T."/>
            <person name="Churcher C."/>
            <person name="Mungall K.L."/>
            <person name="Bentley S.D."/>
            <person name="Sebaihia M."/>
            <person name="Thomson N.R."/>
            <person name="Bason N."/>
            <person name="Beacham I.R."/>
            <person name="Brooks K."/>
            <person name="Brown K.A."/>
            <person name="Brown N.F."/>
            <person name="Challis G.L."/>
            <person name="Cherevach I."/>
            <person name="Chillingworth T."/>
            <person name="Cronin A."/>
            <person name="Crossett B."/>
            <person name="Davis P."/>
            <person name="DeShazer D."/>
            <person name="Feltwell T."/>
            <person name="Fraser A."/>
            <person name="Hance Z."/>
            <person name="Hauser H."/>
            <person name="Holroyd S."/>
            <person name="Jagels K."/>
            <person name="Keith K.E."/>
            <person name="Maddison M."/>
            <person name="Moule S."/>
            <person name="Price C."/>
            <person name="Quail M.A."/>
            <person name="Rabbinowitsch E."/>
            <person name="Rutherford K."/>
            <person name="Sanders M."/>
            <person name="Simmonds M."/>
            <person name="Songsivilai S."/>
            <person name="Stevens K."/>
            <person name="Tumapa S."/>
            <person name="Vesaratchavest M."/>
            <person name="Whitehead S."/>
            <person name="Yeats C."/>
            <person name="Barrell B.G."/>
            <person name="Oyston P.C.F."/>
            <person name="Parkhill J."/>
        </authorList>
    </citation>
    <scope>NUCLEOTIDE SEQUENCE [LARGE SCALE GENOMIC DNA]</scope>
    <source>
        <strain>K96243</strain>
    </source>
</reference>
<sequence>MSTEKINFDIHKILTLLPHRYPILLVDRVLELEPHKAIKALKNVTVNEPFFTGHFPKRPVMPGVLIIEALAQAAALLTFAEAQPKDPENTLYYFVGIDNARFKRVVEPGDQLILNVTFERYIRGIWKFKAVAEVDGKVAAEAELMCTVKTADAAP</sequence>
<comment type="function">
    <text evidence="1">Involved in unsaturated fatty acids biosynthesis. Catalyzes the dehydration of short chain beta-hydroxyacyl-ACPs and long chain saturated and unsaturated beta-hydroxyacyl-ACPs.</text>
</comment>
<comment type="catalytic activity">
    <reaction evidence="1">
        <text>a (3R)-hydroxyacyl-[ACP] = a (2E)-enoyl-[ACP] + H2O</text>
        <dbReference type="Rhea" id="RHEA:13097"/>
        <dbReference type="Rhea" id="RHEA-COMP:9925"/>
        <dbReference type="Rhea" id="RHEA-COMP:9945"/>
        <dbReference type="ChEBI" id="CHEBI:15377"/>
        <dbReference type="ChEBI" id="CHEBI:78784"/>
        <dbReference type="ChEBI" id="CHEBI:78827"/>
        <dbReference type="EC" id="4.2.1.59"/>
    </reaction>
</comment>
<comment type="subcellular location">
    <subcellularLocation>
        <location evidence="1">Cytoplasm</location>
    </subcellularLocation>
</comment>
<comment type="similarity">
    <text evidence="1">Belongs to the thioester dehydratase family. FabZ subfamily.</text>
</comment>
<comment type="sequence caution" evidence="2">
    <conflict type="erroneous initiation">
        <sequence resource="EMBL-CDS" id="CAH36150"/>
    </conflict>
</comment>
<proteinExistence type="inferred from homology"/>
<organism>
    <name type="scientific">Burkholderia pseudomallei (strain K96243)</name>
    <dbReference type="NCBI Taxonomy" id="272560"/>
    <lineage>
        <taxon>Bacteria</taxon>
        <taxon>Pseudomonadati</taxon>
        <taxon>Pseudomonadota</taxon>
        <taxon>Betaproteobacteria</taxon>
        <taxon>Burkholderiales</taxon>
        <taxon>Burkholderiaceae</taxon>
        <taxon>Burkholderia</taxon>
        <taxon>pseudomallei group</taxon>
    </lineage>
</organism>
<gene>
    <name evidence="1" type="primary">fabZ</name>
    <name type="ordered locus">BPSL2148</name>
</gene>
<protein>
    <recommendedName>
        <fullName evidence="1">3-hydroxyacyl-[acyl-carrier-protein] dehydratase FabZ</fullName>
        <ecNumber evidence="1">4.2.1.59</ecNumber>
    </recommendedName>
    <alternativeName>
        <fullName evidence="1">(3R)-hydroxymyristoyl-[acyl-carrier-protein] dehydratase</fullName>
        <shortName evidence="1">(3R)-hydroxymyristoyl-ACP dehydrase</shortName>
    </alternativeName>
    <alternativeName>
        <fullName evidence="1">Beta-hydroxyacyl-ACP dehydratase</fullName>
    </alternativeName>
</protein>
<accession>Q63T23</accession>
<evidence type="ECO:0000255" key="1">
    <source>
        <dbReference type="HAMAP-Rule" id="MF_00406"/>
    </source>
</evidence>
<evidence type="ECO:0000305" key="2"/>
<dbReference type="EC" id="4.2.1.59" evidence="1"/>
<dbReference type="EMBL" id="BX571965">
    <property type="protein sequence ID" value="CAH36150.1"/>
    <property type="status" value="ALT_INIT"/>
    <property type="molecule type" value="Genomic_DNA"/>
</dbReference>
<dbReference type="RefSeq" id="WP_004192266.1">
    <property type="nucleotide sequence ID" value="NZ_CP009538.1"/>
</dbReference>
<dbReference type="RefSeq" id="YP_108743.1">
    <property type="nucleotide sequence ID" value="NC_006350.1"/>
</dbReference>
<dbReference type="SMR" id="Q63T23"/>
<dbReference type="STRING" id="272560.BPSL2148"/>
<dbReference type="GeneID" id="93060689"/>
<dbReference type="KEGG" id="bps:BPSL2148"/>
<dbReference type="PATRIC" id="fig|272560.51.peg.3305"/>
<dbReference type="eggNOG" id="COG0764">
    <property type="taxonomic scope" value="Bacteria"/>
</dbReference>
<dbReference type="Proteomes" id="UP000000605">
    <property type="component" value="Chromosome 1"/>
</dbReference>
<dbReference type="GO" id="GO:0005737">
    <property type="term" value="C:cytoplasm"/>
    <property type="evidence" value="ECO:0007669"/>
    <property type="project" value="UniProtKB-SubCell"/>
</dbReference>
<dbReference type="GO" id="GO:0016020">
    <property type="term" value="C:membrane"/>
    <property type="evidence" value="ECO:0007669"/>
    <property type="project" value="GOC"/>
</dbReference>
<dbReference type="GO" id="GO:0019171">
    <property type="term" value="F:(3R)-hydroxyacyl-[acyl-carrier-protein] dehydratase activity"/>
    <property type="evidence" value="ECO:0007669"/>
    <property type="project" value="UniProtKB-EC"/>
</dbReference>
<dbReference type="GO" id="GO:0006633">
    <property type="term" value="P:fatty acid biosynthetic process"/>
    <property type="evidence" value="ECO:0007669"/>
    <property type="project" value="UniProtKB-UniRule"/>
</dbReference>
<dbReference type="GO" id="GO:0009245">
    <property type="term" value="P:lipid A biosynthetic process"/>
    <property type="evidence" value="ECO:0007669"/>
    <property type="project" value="UniProtKB-UniRule"/>
</dbReference>
<dbReference type="CDD" id="cd01288">
    <property type="entry name" value="FabZ"/>
    <property type="match status" value="1"/>
</dbReference>
<dbReference type="FunFam" id="3.10.129.10:FF:000001">
    <property type="entry name" value="3-hydroxyacyl-[acyl-carrier-protein] dehydratase FabZ"/>
    <property type="match status" value="1"/>
</dbReference>
<dbReference type="Gene3D" id="3.10.129.10">
    <property type="entry name" value="Hotdog Thioesterase"/>
    <property type="match status" value="1"/>
</dbReference>
<dbReference type="HAMAP" id="MF_00406">
    <property type="entry name" value="FabZ"/>
    <property type="match status" value="1"/>
</dbReference>
<dbReference type="InterPro" id="IPR013114">
    <property type="entry name" value="FabA_FabZ"/>
</dbReference>
<dbReference type="InterPro" id="IPR010084">
    <property type="entry name" value="FabZ"/>
</dbReference>
<dbReference type="InterPro" id="IPR029069">
    <property type="entry name" value="HotDog_dom_sf"/>
</dbReference>
<dbReference type="NCBIfam" id="TIGR01750">
    <property type="entry name" value="fabZ"/>
    <property type="match status" value="1"/>
</dbReference>
<dbReference type="NCBIfam" id="NF000582">
    <property type="entry name" value="PRK00006.1"/>
    <property type="match status" value="1"/>
</dbReference>
<dbReference type="PANTHER" id="PTHR30272">
    <property type="entry name" value="3-HYDROXYACYL-[ACYL-CARRIER-PROTEIN] DEHYDRATASE"/>
    <property type="match status" value="1"/>
</dbReference>
<dbReference type="PANTHER" id="PTHR30272:SF1">
    <property type="entry name" value="3-HYDROXYACYL-[ACYL-CARRIER-PROTEIN] DEHYDRATASE"/>
    <property type="match status" value="1"/>
</dbReference>
<dbReference type="Pfam" id="PF07977">
    <property type="entry name" value="FabA"/>
    <property type="match status" value="1"/>
</dbReference>
<dbReference type="SUPFAM" id="SSF54637">
    <property type="entry name" value="Thioesterase/thiol ester dehydrase-isomerase"/>
    <property type="match status" value="1"/>
</dbReference>
<keyword id="KW-0963">Cytoplasm</keyword>
<keyword id="KW-0441">Lipid A biosynthesis</keyword>
<keyword id="KW-0444">Lipid biosynthesis</keyword>
<keyword id="KW-0443">Lipid metabolism</keyword>
<keyword id="KW-0456">Lyase</keyword>
<keyword id="KW-1185">Reference proteome</keyword>